<name>PPI4_ARATH</name>
<evidence type="ECO:0000250" key="1"/>
<evidence type="ECO:0000255" key="2"/>
<evidence type="ECO:0000305" key="3"/>
<dbReference type="EMBL" id="AC022520">
    <property type="protein sequence ID" value="AAF87866.1"/>
    <property type="status" value="ALT_SEQ"/>
    <property type="molecule type" value="Genomic_DNA"/>
</dbReference>
<dbReference type="EMBL" id="CP002684">
    <property type="protein sequence ID" value="AEE32892.1"/>
    <property type="molecule type" value="Genomic_DNA"/>
</dbReference>
<dbReference type="EMBL" id="AY063988">
    <property type="protein sequence ID" value="AAL36344.1"/>
    <property type="molecule type" value="mRNA"/>
</dbReference>
<dbReference type="PIR" id="G96571">
    <property type="entry name" value="G96571"/>
</dbReference>
<dbReference type="RefSeq" id="NP_175719.1">
    <property type="nucleotide sequence ID" value="NM_104190.4"/>
</dbReference>
<dbReference type="SMR" id="Q8VZN4"/>
<dbReference type="FunCoup" id="Q8VZN4">
    <property type="interactions" value="2"/>
</dbReference>
<dbReference type="STRING" id="3702.Q8VZN4"/>
<dbReference type="iPTMnet" id="Q8VZN4"/>
<dbReference type="PaxDb" id="3702-AT1G53110.1"/>
<dbReference type="ProteomicsDB" id="249349"/>
<dbReference type="EnsemblPlants" id="AT1G53110.1">
    <property type="protein sequence ID" value="AT1G53110.1"/>
    <property type="gene ID" value="AT1G53110"/>
</dbReference>
<dbReference type="GeneID" id="841745"/>
<dbReference type="Gramene" id="AT1G53110.1">
    <property type="protein sequence ID" value="AT1G53110.1"/>
    <property type="gene ID" value="AT1G53110"/>
</dbReference>
<dbReference type="KEGG" id="ath:AT1G53110"/>
<dbReference type="Araport" id="AT1G53110"/>
<dbReference type="TAIR" id="AT1G53110"/>
<dbReference type="eggNOG" id="ENOG502QQX1">
    <property type="taxonomic scope" value="Eukaryota"/>
</dbReference>
<dbReference type="HOGENOM" id="CLU_689563_0_0_1"/>
<dbReference type="InParanoid" id="Q8VZN4"/>
<dbReference type="OMA" id="QSRVVMK"/>
<dbReference type="PhylomeDB" id="Q8VZN4"/>
<dbReference type="PRO" id="PR:Q8VZN4"/>
<dbReference type="Proteomes" id="UP000006548">
    <property type="component" value="Chromosome 1"/>
</dbReference>
<dbReference type="ExpressionAtlas" id="Q8VZN4">
    <property type="expression patterns" value="baseline and differential"/>
</dbReference>
<dbReference type="GO" id="GO:0005789">
    <property type="term" value="C:endoplasmic reticulum membrane"/>
    <property type="evidence" value="ECO:0000250"/>
    <property type="project" value="UniProtKB"/>
</dbReference>
<dbReference type="GO" id="GO:0005886">
    <property type="term" value="C:plasma membrane"/>
    <property type="evidence" value="ECO:0000250"/>
    <property type="project" value="UniProtKB"/>
</dbReference>
<dbReference type="GO" id="GO:0010155">
    <property type="term" value="P:regulation of proton transport"/>
    <property type="evidence" value="ECO:0000250"/>
    <property type="project" value="UniProtKB"/>
</dbReference>
<dbReference type="InterPro" id="IPR055282">
    <property type="entry name" value="PPI1-4"/>
</dbReference>
<dbReference type="PANTHER" id="PTHR32219:SF8">
    <property type="entry name" value="PROTON PUMP-INTERACTOR 2-RELATED"/>
    <property type="match status" value="1"/>
</dbReference>
<dbReference type="PANTHER" id="PTHR32219">
    <property type="entry name" value="RNA-BINDING PROTEIN YLMH-RELATED"/>
    <property type="match status" value="1"/>
</dbReference>
<feature type="chain" id="PRO_0000420216" description="Proton pump-interactor 4">
    <location>
        <begin position="1"/>
        <end position="439"/>
    </location>
</feature>
<feature type="transmembrane region" description="Helical" evidence="2">
    <location>
        <begin position="415"/>
        <end position="435"/>
    </location>
</feature>
<feature type="coiled-coil region" evidence="2">
    <location>
        <begin position="286"/>
        <end position="354"/>
    </location>
</feature>
<sequence length="439" mass="51017">MSASILLCDGFDVRRILTGKLNGDESSTVTTEEDDEAVFSGEEWCGESSYCFYFVKQFAYDDPEIKAKIDEADHEVYHCNTDRIHIANRLKSKRAARLSLVASMETLMSMKINEVEKEQEVVRGRIYRLGERLSEIKMEIELLDVQMACVLNQRDKAVERIKFLRMQRDKGNAAFYQSRVVMKKAIELAASGNVRDLEELADSEVEKFMSRWNNDKAFRDNYKKRILPSVNERKLRCDVQIRDLEGNLDTENGNETVVKKAIEYKRFSTEEESDDFDIPVYEKLGKEEKEIDEETLKEKKREEQLEKARLAMERKRKLHEKAAAKAVIRVKKEAEKKRKELDKRAKKKKAVCKSSSVDVDRTTETVSEASKPEKEKLLNGRSVFPKQRSYNYRYHGKGNDAVLKAIIKRRKAYRLWVWTVSSAAVALPLALLVVFYYVR</sequence>
<accession>Q8VZN4</accession>
<accession>Q9LNN6</accession>
<reference key="1">
    <citation type="journal article" date="2000" name="Nature">
        <title>Sequence and analysis of chromosome 1 of the plant Arabidopsis thaliana.</title>
        <authorList>
            <person name="Theologis A."/>
            <person name="Ecker J.R."/>
            <person name="Palm C.J."/>
            <person name="Federspiel N.A."/>
            <person name="Kaul S."/>
            <person name="White O."/>
            <person name="Alonso J."/>
            <person name="Altafi H."/>
            <person name="Araujo R."/>
            <person name="Bowman C.L."/>
            <person name="Brooks S.Y."/>
            <person name="Buehler E."/>
            <person name="Chan A."/>
            <person name="Chao Q."/>
            <person name="Chen H."/>
            <person name="Cheuk R.F."/>
            <person name="Chin C.W."/>
            <person name="Chung M.K."/>
            <person name="Conn L."/>
            <person name="Conway A.B."/>
            <person name="Conway A.R."/>
            <person name="Creasy T.H."/>
            <person name="Dewar K."/>
            <person name="Dunn P."/>
            <person name="Etgu P."/>
            <person name="Feldblyum T.V."/>
            <person name="Feng J.-D."/>
            <person name="Fong B."/>
            <person name="Fujii C.Y."/>
            <person name="Gill J.E."/>
            <person name="Goldsmith A.D."/>
            <person name="Haas B."/>
            <person name="Hansen N.F."/>
            <person name="Hughes B."/>
            <person name="Huizar L."/>
            <person name="Hunter J.L."/>
            <person name="Jenkins J."/>
            <person name="Johnson-Hopson C."/>
            <person name="Khan S."/>
            <person name="Khaykin E."/>
            <person name="Kim C.J."/>
            <person name="Koo H.L."/>
            <person name="Kremenetskaia I."/>
            <person name="Kurtz D.B."/>
            <person name="Kwan A."/>
            <person name="Lam B."/>
            <person name="Langin-Hooper S."/>
            <person name="Lee A."/>
            <person name="Lee J.M."/>
            <person name="Lenz C.A."/>
            <person name="Li J.H."/>
            <person name="Li Y.-P."/>
            <person name="Lin X."/>
            <person name="Liu S.X."/>
            <person name="Liu Z.A."/>
            <person name="Luros J.S."/>
            <person name="Maiti R."/>
            <person name="Marziali A."/>
            <person name="Militscher J."/>
            <person name="Miranda M."/>
            <person name="Nguyen M."/>
            <person name="Nierman W.C."/>
            <person name="Osborne B.I."/>
            <person name="Pai G."/>
            <person name="Peterson J."/>
            <person name="Pham P.K."/>
            <person name="Rizzo M."/>
            <person name="Rooney T."/>
            <person name="Rowley D."/>
            <person name="Sakano H."/>
            <person name="Salzberg S.L."/>
            <person name="Schwartz J.R."/>
            <person name="Shinn P."/>
            <person name="Southwick A.M."/>
            <person name="Sun H."/>
            <person name="Tallon L.J."/>
            <person name="Tambunga G."/>
            <person name="Toriumi M.J."/>
            <person name="Town C.D."/>
            <person name="Utterback T."/>
            <person name="Van Aken S."/>
            <person name="Vaysberg M."/>
            <person name="Vysotskaia V.S."/>
            <person name="Walker M."/>
            <person name="Wu D."/>
            <person name="Yu G."/>
            <person name="Fraser C.M."/>
            <person name="Venter J.C."/>
            <person name="Davis R.W."/>
        </authorList>
    </citation>
    <scope>NUCLEOTIDE SEQUENCE [LARGE SCALE GENOMIC DNA]</scope>
    <source>
        <strain>cv. Columbia</strain>
    </source>
</reference>
<reference key="2">
    <citation type="journal article" date="2017" name="Plant J.">
        <title>Araport11: a complete reannotation of the Arabidopsis thaliana reference genome.</title>
        <authorList>
            <person name="Cheng C.Y."/>
            <person name="Krishnakumar V."/>
            <person name="Chan A.P."/>
            <person name="Thibaud-Nissen F."/>
            <person name="Schobel S."/>
            <person name="Town C.D."/>
        </authorList>
    </citation>
    <scope>GENOME REANNOTATION</scope>
    <source>
        <strain>cv. Columbia</strain>
    </source>
</reference>
<reference key="3">
    <citation type="journal article" date="2003" name="Science">
        <title>Empirical analysis of transcriptional activity in the Arabidopsis genome.</title>
        <authorList>
            <person name="Yamada K."/>
            <person name="Lim J."/>
            <person name="Dale J.M."/>
            <person name="Chen H."/>
            <person name="Shinn P."/>
            <person name="Palm C.J."/>
            <person name="Southwick A.M."/>
            <person name="Wu H.C."/>
            <person name="Kim C.J."/>
            <person name="Nguyen M."/>
            <person name="Pham P.K."/>
            <person name="Cheuk R.F."/>
            <person name="Karlin-Newmann G."/>
            <person name="Liu S.X."/>
            <person name="Lam B."/>
            <person name="Sakano H."/>
            <person name="Wu T."/>
            <person name="Yu G."/>
            <person name="Miranda M."/>
            <person name="Quach H.L."/>
            <person name="Tripp M."/>
            <person name="Chang C.H."/>
            <person name="Lee J.M."/>
            <person name="Toriumi M.J."/>
            <person name="Chan M.M."/>
            <person name="Tang C.C."/>
            <person name="Onodera C.S."/>
            <person name="Deng J.M."/>
            <person name="Akiyama K."/>
            <person name="Ansari Y."/>
            <person name="Arakawa T."/>
            <person name="Banh J."/>
            <person name="Banno F."/>
            <person name="Bowser L."/>
            <person name="Brooks S.Y."/>
            <person name="Carninci P."/>
            <person name="Chao Q."/>
            <person name="Choy N."/>
            <person name="Enju A."/>
            <person name="Goldsmith A.D."/>
            <person name="Gurjal M."/>
            <person name="Hansen N.F."/>
            <person name="Hayashizaki Y."/>
            <person name="Johnson-Hopson C."/>
            <person name="Hsuan V.W."/>
            <person name="Iida K."/>
            <person name="Karnes M."/>
            <person name="Khan S."/>
            <person name="Koesema E."/>
            <person name="Ishida J."/>
            <person name="Jiang P.X."/>
            <person name="Jones T."/>
            <person name="Kawai J."/>
            <person name="Kamiya A."/>
            <person name="Meyers C."/>
            <person name="Nakajima M."/>
            <person name="Narusaka M."/>
            <person name="Seki M."/>
            <person name="Sakurai T."/>
            <person name="Satou M."/>
            <person name="Tamse R."/>
            <person name="Vaysberg M."/>
            <person name="Wallender E.K."/>
            <person name="Wong C."/>
            <person name="Yamamura Y."/>
            <person name="Yuan S."/>
            <person name="Shinozaki K."/>
            <person name="Davis R.W."/>
            <person name="Theologis A."/>
            <person name="Ecker J.R."/>
        </authorList>
    </citation>
    <scope>NUCLEOTIDE SEQUENCE [LARGE SCALE MRNA]</scope>
    <source>
        <strain>cv. Columbia</strain>
    </source>
</reference>
<reference key="4">
    <citation type="journal article" date="2002" name="Plant J.">
        <title>A novel interaction partner for the C-terminus of Arabidopsis thaliana plasma membrane H+-ATPase (AHA1 isoform): site and mechanism of action on H+-ATPase activity differ from those of 14-3-3 proteins.</title>
        <authorList>
            <person name="Morandini P."/>
            <person name="Valera M."/>
            <person name="Albumi C."/>
            <person name="Bonza M.C."/>
            <person name="Giacometti S."/>
            <person name="Ravera G."/>
            <person name="Murgia I."/>
            <person name="Soave C."/>
            <person name="De Michelis M.I."/>
        </authorList>
    </citation>
    <scope>GENE FAMILY</scope>
    <scope>NOMENCLATURE</scope>
</reference>
<protein>
    <recommendedName>
        <fullName>Proton pump-interactor 4</fullName>
    </recommendedName>
</protein>
<keyword id="KW-1003">Cell membrane</keyword>
<keyword id="KW-0175">Coiled coil</keyword>
<keyword id="KW-0256">Endoplasmic reticulum</keyword>
<keyword id="KW-0472">Membrane</keyword>
<keyword id="KW-1185">Reference proteome</keyword>
<keyword id="KW-0812">Transmembrane</keyword>
<keyword id="KW-1133">Transmembrane helix</keyword>
<proteinExistence type="evidence at transcript level"/>
<organism>
    <name type="scientific">Arabidopsis thaliana</name>
    <name type="common">Mouse-ear cress</name>
    <dbReference type="NCBI Taxonomy" id="3702"/>
    <lineage>
        <taxon>Eukaryota</taxon>
        <taxon>Viridiplantae</taxon>
        <taxon>Streptophyta</taxon>
        <taxon>Embryophyta</taxon>
        <taxon>Tracheophyta</taxon>
        <taxon>Spermatophyta</taxon>
        <taxon>Magnoliopsida</taxon>
        <taxon>eudicotyledons</taxon>
        <taxon>Gunneridae</taxon>
        <taxon>Pentapetalae</taxon>
        <taxon>rosids</taxon>
        <taxon>malvids</taxon>
        <taxon>Brassicales</taxon>
        <taxon>Brassicaceae</taxon>
        <taxon>Camelineae</taxon>
        <taxon>Arabidopsis</taxon>
    </lineage>
</organism>
<comment type="function">
    <text evidence="1">May regulate plasma membrane ATPase activity.</text>
</comment>
<comment type="subcellular location">
    <subcellularLocation>
        <location evidence="1">Cell membrane</location>
        <topology evidence="1">Single-pass membrane protein</topology>
    </subcellularLocation>
    <subcellularLocation>
        <location evidence="1">Endoplasmic reticulum membrane</location>
        <topology evidence="1">Single-pass membrane protein</topology>
    </subcellularLocation>
</comment>
<comment type="similarity">
    <text evidence="3">Belongs to the plant Proton pump-interactor protein family.</text>
</comment>
<comment type="sequence caution" evidence="3">
    <conflict type="erroneous gene model prediction">
        <sequence resource="EMBL-CDS" id="AAF87866"/>
    </conflict>
</comment>
<gene>
    <name type="primary">PPI4</name>
    <name type="ordered locus">At1g53110</name>
    <name type="ORF">F8L10.22</name>
</gene>